<evidence type="ECO:0000255" key="1">
    <source>
        <dbReference type="HAMAP-Rule" id="MF_00293"/>
    </source>
</evidence>
<evidence type="ECO:0000305" key="2"/>
<name>PSBN_TRIEI</name>
<organism>
    <name type="scientific">Trichodesmium erythraeum (strain IMS101)</name>
    <dbReference type="NCBI Taxonomy" id="203124"/>
    <lineage>
        <taxon>Bacteria</taxon>
        <taxon>Bacillati</taxon>
        <taxon>Cyanobacteriota</taxon>
        <taxon>Cyanophyceae</taxon>
        <taxon>Oscillatoriophycideae</taxon>
        <taxon>Oscillatoriales</taxon>
        <taxon>Microcoleaceae</taxon>
        <taxon>Trichodesmium</taxon>
    </lineage>
</organism>
<protein>
    <recommendedName>
        <fullName evidence="1">Protein PsbN</fullName>
    </recommendedName>
</protein>
<sequence length="43" mass="4611">MEPATVLSISIGVMVVAITGFSIYTAFGPPSKELVDPFDEHED</sequence>
<reference key="1">
    <citation type="journal article" date="2015" name="Proc. Natl. Acad. Sci. U.S.A.">
        <title>Trichodesmium genome maintains abundant, widespread noncoding DNA in situ, despite oligotrophic lifestyle.</title>
        <authorList>
            <person name="Walworth N."/>
            <person name="Pfreundt U."/>
            <person name="Nelson W.C."/>
            <person name="Mincer T."/>
            <person name="Heidelberg J.F."/>
            <person name="Fu F."/>
            <person name="Waterbury J.B."/>
            <person name="Glavina del Rio T."/>
            <person name="Goodwin L."/>
            <person name="Kyrpides N.C."/>
            <person name="Land M.L."/>
            <person name="Woyke T."/>
            <person name="Hutchins D.A."/>
            <person name="Hess W.R."/>
            <person name="Webb E.A."/>
        </authorList>
    </citation>
    <scope>NUCLEOTIDE SEQUENCE [LARGE SCALE GENOMIC DNA]</scope>
    <source>
        <strain>IMS101</strain>
    </source>
</reference>
<comment type="function">
    <text evidence="1">May play a role in photosystem I and II biogenesis.</text>
</comment>
<comment type="subcellular location">
    <subcellularLocation>
        <location evidence="1">Cellular thylakoid membrane</location>
        <topology evidence="1">Single-pass membrane protein</topology>
    </subcellularLocation>
</comment>
<comment type="similarity">
    <text evidence="1">Belongs to the PsbN family.</text>
</comment>
<comment type="caution">
    <text evidence="1">Originally thought to be a component of PSII; based on experiments in Synechocystis, N.tabacum and barley, and its absence from PSII in T.elongatus and T.vulcanus, this is probably not true.</text>
</comment>
<comment type="sequence caution" evidence="2">
    <conflict type="erroneous initiation">
        <sequence resource="EMBL-CDS" id="ABG52040"/>
    </conflict>
    <text>Truncated N-terminus.</text>
</comment>
<accession>Q110N4</accession>
<keyword id="KW-0472">Membrane</keyword>
<keyword id="KW-0793">Thylakoid</keyword>
<keyword id="KW-0812">Transmembrane</keyword>
<keyword id="KW-1133">Transmembrane helix</keyword>
<proteinExistence type="inferred from homology"/>
<dbReference type="EMBL" id="CP000393">
    <property type="protein sequence ID" value="ABG52040.1"/>
    <property type="status" value="ALT_INIT"/>
    <property type="molecule type" value="Genomic_DNA"/>
</dbReference>
<dbReference type="RefSeq" id="WP_011612399.1">
    <property type="nucleotide sequence ID" value="NC_008312.1"/>
</dbReference>
<dbReference type="SMR" id="Q110N4"/>
<dbReference type="STRING" id="203124.Tery_2867"/>
<dbReference type="KEGG" id="ter:Tery_2867"/>
<dbReference type="HOGENOM" id="CLU_205504_2_0_3"/>
<dbReference type="OrthoDB" id="532561at2"/>
<dbReference type="GO" id="GO:0031676">
    <property type="term" value="C:plasma membrane-derived thylakoid membrane"/>
    <property type="evidence" value="ECO:0007669"/>
    <property type="project" value="UniProtKB-SubCell"/>
</dbReference>
<dbReference type="GO" id="GO:0015979">
    <property type="term" value="P:photosynthesis"/>
    <property type="evidence" value="ECO:0007669"/>
    <property type="project" value="InterPro"/>
</dbReference>
<dbReference type="HAMAP" id="MF_00293">
    <property type="entry name" value="PSII_PsbN"/>
    <property type="match status" value="1"/>
</dbReference>
<dbReference type="InterPro" id="IPR003398">
    <property type="entry name" value="PSII_PsbN"/>
</dbReference>
<dbReference type="NCBIfam" id="NF009650">
    <property type="entry name" value="PRK13183.1"/>
    <property type="match status" value="1"/>
</dbReference>
<dbReference type="PANTHER" id="PTHR35326">
    <property type="entry name" value="PROTEIN PSBN"/>
    <property type="match status" value="1"/>
</dbReference>
<dbReference type="PANTHER" id="PTHR35326:SF3">
    <property type="entry name" value="PROTEIN PSBN"/>
    <property type="match status" value="1"/>
</dbReference>
<dbReference type="Pfam" id="PF02468">
    <property type="entry name" value="PsbN"/>
    <property type="match status" value="1"/>
</dbReference>
<feature type="chain" id="PRO_0000362171" description="Protein PsbN">
    <location>
        <begin position="1"/>
        <end position="43"/>
    </location>
</feature>
<feature type="transmembrane region" description="Helical" evidence="1">
    <location>
        <begin position="7"/>
        <end position="27"/>
    </location>
</feature>
<gene>
    <name evidence="1" type="primary">psbN</name>
    <name type="ordered locus">Tery_2867</name>
</gene>